<evidence type="ECO:0000250" key="1">
    <source>
        <dbReference type="UniProtKB" id="P00949"/>
    </source>
</evidence>
<evidence type="ECO:0000250" key="2">
    <source>
        <dbReference type="UniProtKB" id="P36871"/>
    </source>
</evidence>
<evidence type="ECO:0000250" key="3">
    <source>
        <dbReference type="UniProtKB" id="Q9SCY0"/>
    </source>
</evidence>
<evidence type="ECO:0000255" key="4"/>
<evidence type="ECO:0000305" key="5"/>
<accession>Q9SMM0</accession>
<name>PGMP_BRANA</name>
<sequence length="629" mass="68554">MSSTYARFDTVFLLSRFAGAKYSPLWPSSSSSSHSSLLSSGIHLRAKPNSRLRSVTGASSSSSGPIIAGSESIEIKSLPTKPIEGQKTGTSGLRKKVKVFMQDNYLANWIQALFNSLPLEDYKDATLVLGGDGRYFNKEASQIIIKIAAGNGVGKILVGQEGILSTPAVSAVIRKRKANGGFIMSASHNPGGPEYDWGIKFNYSSGQPAPESITDKIYGNTLSISEIKVAEIPDIDLSHVGVTKYGNFSVEVIDPISDYLELMEDVFDFDLIRGLLSRSDFGFMFDAMHAVTGAYAKPIFVDNLEAKPDSISNGVPLEDFGHGHPDPNLTYAKDLVDVMYRDDGPDFGAASDGDGDRNMVLGNKFFVTPSDSVAIIAANAQEAIPYFRAGPKGLARSMPTSGALDRVAEKLKLPFFEVPTGWKFFGNLMDAGKLSICGEESFGTGSDHIREKDGIWAVLAWLSILAHRIKDKKPGEKLVSVADVVNEYWATYGRNFFSRYDYEECESEGANKMIEYLRDIVAKSKAGENYGNYVLQFADDFSYKDPVDGSVASKQGVRFVFTDGSRIIYRLSGNGSAGATVRIYIEQFEPDVSKHDVDAQIAIKPLIDLALSVSKLKEFTGREKPTVIT</sequence>
<dbReference type="EC" id="5.4.2.2" evidence="3"/>
<dbReference type="EMBL" id="AJ250771">
    <property type="protein sequence ID" value="CAB60109.1"/>
    <property type="molecule type" value="mRNA"/>
</dbReference>
<dbReference type="RefSeq" id="NP_001302927.1">
    <property type="nucleotide sequence ID" value="NM_001315998.1"/>
</dbReference>
<dbReference type="SMR" id="Q9SMM0"/>
<dbReference type="GeneID" id="106423685"/>
<dbReference type="KEGG" id="bna:106423685"/>
<dbReference type="OrthoDB" id="2291at2759"/>
<dbReference type="GO" id="GO:0009507">
    <property type="term" value="C:chloroplast"/>
    <property type="evidence" value="ECO:0007669"/>
    <property type="project" value="UniProtKB-SubCell"/>
</dbReference>
<dbReference type="GO" id="GO:0000287">
    <property type="term" value="F:magnesium ion binding"/>
    <property type="evidence" value="ECO:0007669"/>
    <property type="project" value="InterPro"/>
</dbReference>
<dbReference type="GO" id="GO:0004614">
    <property type="term" value="F:phosphoglucomutase activity"/>
    <property type="evidence" value="ECO:0007669"/>
    <property type="project" value="UniProtKB-EC"/>
</dbReference>
<dbReference type="GO" id="GO:0006006">
    <property type="term" value="P:glucose metabolic process"/>
    <property type="evidence" value="ECO:0007669"/>
    <property type="project" value="UniProtKB-KW"/>
</dbReference>
<dbReference type="CDD" id="cd03085">
    <property type="entry name" value="PGM1"/>
    <property type="match status" value="1"/>
</dbReference>
<dbReference type="FunFam" id="3.30.310.50:FF:000002">
    <property type="entry name" value="Phosphoglucomutase 5"/>
    <property type="match status" value="1"/>
</dbReference>
<dbReference type="FunFam" id="3.40.120.10:FF:000004">
    <property type="entry name" value="Phosphoglucomutase 5"/>
    <property type="match status" value="1"/>
</dbReference>
<dbReference type="FunFam" id="3.40.120.10:FF:000005">
    <property type="entry name" value="Phosphoglucomutase 5"/>
    <property type="match status" value="1"/>
</dbReference>
<dbReference type="FunFam" id="3.40.120.10:FF:000009">
    <property type="entry name" value="Phosphoglucomutase, cytoplasmic 1"/>
    <property type="match status" value="1"/>
</dbReference>
<dbReference type="Gene3D" id="3.40.120.10">
    <property type="entry name" value="Alpha-D-Glucose-1,6-Bisphosphate, subunit A, domain 3"/>
    <property type="match status" value="3"/>
</dbReference>
<dbReference type="Gene3D" id="3.30.310.50">
    <property type="entry name" value="Alpha-D-phosphohexomutase, C-terminal domain"/>
    <property type="match status" value="1"/>
</dbReference>
<dbReference type="InterPro" id="IPR005844">
    <property type="entry name" value="A-D-PHexomutase_a/b/a-I"/>
</dbReference>
<dbReference type="InterPro" id="IPR016055">
    <property type="entry name" value="A-D-PHexomutase_a/b/a-I/II/III"/>
</dbReference>
<dbReference type="InterPro" id="IPR005845">
    <property type="entry name" value="A-D-PHexomutase_a/b/a-II"/>
</dbReference>
<dbReference type="InterPro" id="IPR005846">
    <property type="entry name" value="A-D-PHexomutase_a/b/a-III"/>
</dbReference>
<dbReference type="InterPro" id="IPR036900">
    <property type="entry name" value="A-D-PHexomutase_C_sf"/>
</dbReference>
<dbReference type="InterPro" id="IPR016066">
    <property type="entry name" value="A-D-PHexomutase_CS"/>
</dbReference>
<dbReference type="InterPro" id="IPR005841">
    <property type="entry name" value="Alpha-D-phosphohexomutase_SF"/>
</dbReference>
<dbReference type="InterPro" id="IPR045244">
    <property type="entry name" value="PGM"/>
</dbReference>
<dbReference type="NCBIfam" id="NF005737">
    <property type="entry name" value="PRK07564.1-1"/>
    <property type="match status" value="1"/>
</dbReference>
<dbReference type="PANTHER" id="PTHR22573:SF59">
    <property type="entry name" value="PHOSPHOGLUCOMUTASE, CHLOROPLASTIC"/>
    <property type="match status" value="1"/>
</dbReference>
<dbReference type="PANTHER" id="PTHR22573">
    <property type="entry name" value="PHOSPHOHEXOMUTASE FAMILY MEMBER"/>
    <property type="match status" value="1"/>
</dbReference>
<dbReference type="Pfam" id="PF24947">
    <property type="entry name" value="PGM1_C_vert_fung"/>
    <property type="match status" value="1"/>
</dbReference>
<dbReference type="Pfam" id="PF02878">
    <property type="entry name" value="PGM_PMM_I"/>
    <property type="match status" value="1"/>
</dbReference>
<dbReference type="Pfam" id="PF02879">
    <property type="entry name" value="PGM_PMM_II"/>
    <property type="match status" value="1"/>
</dbReference>
<dbReference type="Pfam" id="PF02880">
    <property type="entry name" value="PGM_PMM_III"/>
    <property type="match status" value="1"/>
</dbReference>
<dbReference type="PRINTS" id="PR00509">
    <property type="entry name" value="PGMPMM"/>
</dbReference>
<dbReference type="SUPFAM" id="SSF55957">
    <property type="entry name" value="Phosphoglucomutase, C-terminal domain"/>
    <property type="match status" value="1"/>
</dbReference>
<dbReference type="SUPFAM" id="SSF53738">
    <property type="entry name" value="Phosphoglucomutase, first 3 domains"/>
    <property type="match status" value="3"/>
</dbReference>
<dbReference type="PROSITE" id="PS00710">
    <property type="entry name" value="PGM_PMM"/>
    <property type="match status" value="1"/>
</dbReference>
<reference key="1">
    <citation type="journal article" date="2000" name="Plant Physiol.">
        <title>The rug3 locus of pea encodes plastidial phosphoglucomutase.</title>
        <authorList>
            <person name="Harrison C.J."/>
            <person name="Mould R.M."/>
            <person name="Leech M.J."/>
            <person name="Johnson S.A."/>
            <person name="Turner L."/>
            <person name="Schreck S.L."/>
            <person name="Baird K.M."/>
            <person name="Jack P.L."/>
            <person name="Rawsthorne S."/>
            <person name="Hedley C.L."/>
            <person name="Wang T.L."/>
        </authorList>
    </citation>
    <scope>NUCLEOTIDE SEQUENCE [MRNA]</scope>
    <source>
        <strain>cv. Ascari</strain>
    </source>
</reference>
<protein>
    <recommendedName>
        <fullName>Phosphoglucomutase, chloroplastic</fullName>
        <shortName>PGM</shortName>
        <ecNumber evidence="3">5.4.2.2</ecNumber>
    </recommendedName>
    <alternativeName>
        <fullName>Glucose phosphomutase</fullName>
    </alternativeName>
</protein>
<feature type="transit peptide" description="Chloroplast" evidence="4">
    <location>
        <begin position="1"/>
        <end position="69"/>
    </location>
</feature>
<feature type="chain" id="PRO_0000023896" description="Phosphoglucomutase, chloroplastic">
    <location>
        <begin position="70"/>
        <end position="629"/>
    </location>
</feature>
<feature type="active site" description="Phosphoserine intermediate" evidence="1">
    <location>
        <position position="187"/>
    </location>
</feature>
<feature type="binding site" evidence="1">
    <location>
        <position position="94"/>
    </location>
    <ligand>
        <name>alpha-D-glucose 1,6-bisphosphate</name>
        <dbReference type="ChEBI" id="CHEBI:58392"/>
    </ligand>
</feature>
<feature type="binding site" evidence="1">
    <location>
        <position position="187"/>
    </location>
    <ligand>
        <name>alpha-D-glucose 1,6-bisphosphate</name>
        <dbReference type="ChEBI" id="CHEBI:58392"/>
    </ligand>
</feature>
<feature type="binding site" description="via phosphate group" evidence="1">
    <location>
        <position position="187"/>
    </location>
    <ligand>
        <name>Mg(2+)</name>
        <dbReference type="ChEBI" id="CHEBI:18420"/>
    </ligand>
</feature>
<feature type="binding site" evidence="1">
    <location>
        <position position="352"/>
    </location>
    <ligand>
        <name>Mg(2+)</name>
        <dbReference type="ChEBI" id="CHEBI:18420"/>
    </ligand>
</feature>
<feature type="binding site" evidence="1">
    <location>
        <position position="354"/>
    </location>
    <ligand>
        <name>Mg(2+)</name>
        <dbReference type="ChEBI" id="CHEBI:18420"/>
    </ligand>
</feature>
<feature type="binding site" evidence="1">
    <location>
        <position position="356"/>
    </location>
    <ligand>
        <name>alpha-D-glucose 1,6-bisphosphate</name>
        <dbReference type="ChEBI" id="CHEBI:58392"/>
    </ligand>
</feature>
<feature type="binding site" evidence="1">
    <location>
        <position position="356"/>
    </location>
    <ligand>
        <name>Mg(2+)</name>
        <dbReference type="ChEBI" id="CHEBI:18420"/>
    </ligand>
</feature>
<feature type="binding site" evidence="1">
    <location>
        <position position="357"/>
    </location>
    <ligand>
        <name>alpha-D-glucose 1,6-bisphosphate</name>
        <dbReference type="ChEBI" id="CHEBI:58392"/>
    </ligand>
</feature>
<feature type="binding site" evidence="1">
    <location>
        <position position="420"/>
    </location>
    <ligand>
        <name>alpha-D-glucose 1,6-bisphosphate</name>
        <dbReference type="ChEBI" id="CHEBI:58392"/>
    </ligand>
</feature>
<feature type="binding site" evidence="1">
    <location>
        <position position="439"/>
    </location>
    <ligand>
        <name>alpha-D-glucose 1,6-bisphosphate</name>
        <dbReference type="ChEBI" id="CHEBI:58392"/>
    </ligand>
</feature>
<feature type="binding site" evidence="1">
    <location>
        <position position="441"/>
    </location>
    <ligand>
        <name>alpha-D-glucose 1,6-bisphosphate</name>
        <dbReference type="ChEBI" id="CHEBI:58392"/>
    </ligand>
</feature>
<feature type="binding site" evidence="1">
    <location>
        <position position="452"/>
    </location>
    <ligand>
        <name>alpha-D-glucose 1,6-bisphosphate</name>
        <dbReference type="ChEBI" id="CHEBI:58392"/>
    </ligand>
</feature>
<feature type="modified residue" description="Phosphoserine" evidence="1">
    <location>
        <position position="187"/>
    </location>
</feature>
<keyword id="KW-0119">Carbohydrate metabolism</keyword>
<keyword id="KW-0150">Chloroplast</keyword>
<keyword id="KW-0313">Glucose metabolism</keyword>
<keyword id="KW-0413">Isomerase</keyword>
<keyword id="KW-0460">Magnesium</keyword>
<keyword id="KW-0479">Metal-binding</keyword>
<keyword id="KW-0597">Phosphoprotein</keyword>
<keyword id="KW-0934">Plastid</keyword>
<keyword id="KW-0809">Transit peptide</keyword>
<organism>
    <name type="scientific">Brassica napus</name>
    <name type="common">Rape</name>
    <dbReference type="NCBI Taxonomy" id="3708"/>
    <lineage>
        <taxon>Eukaryota</taxon>
        <taxon>Viridiplantae</taxon>
        <taxon>Streptophyta</taxon>
        <taxon>Embryophyta</taxon>
        <taxon>Tracheophyta</taxon>
        <taxon>Spermatophyta</taxon>
        <taxon>Magnoliopsida</taxon>
        <taxon>eudicotyledons</taxon>
        <taxon>Gunneridae</taxon>
        <taxon>Pentapetalae</taxon>
        <taxon>rosids</taxon>
        <taxon>malvids</taxon>
        <taxon>Brassicales</taxon>
        <taxon>Brassicaceae</taxon>
        <taxon>Brassiceae</taxon>
        <taxon>Brassica</taxon>
    </lineage>
</organism>
<proteinExistence type="evidence at transcript level"/>
<comment type="function">
    <text evidence="2 3">Catalyzes the reversible isomerization of alpha-D-glucose 1-phosphate to alpha-D-glucose 6-phosphate (By similarity). The mechanism proceeds via the intermediate compound alpha-D-glucose 1,6-bisphosphate (By similarity). This enzyme participates in both the breakdown and synthesis of glucose (By similarity).</text>
</comment>
<comment type="catalytic activity">
    <reaction evidence="3">
        <text>alpha-D-glucose 1-phosphate = alpha-D-glucose 6-phosphate</text>
        <dbReference type="Rhea" id="RHEA:23536"/>
        <dbReference type="ChEBI" id="CHEBI:58225"/>
        <dbReference type="ChEBI" id="CHEBI:58601"/>
        <dbReference type="EC" id="5.4.2.2"/>
    </reaction>
</comment>
<comment type="catalytic activity">
    <reaction evidence="3">
        <text>O-phospho-L-seryl-[protein] + alpha-D-glucose 1-phosphate = alpha-D-glucose 1,6-bisphosphate + L-seryl-[protein]</text>
        <dbReference type="Rhea" id="RHEA:68748"/>
        <dbReference type="Rhea" id="RHEA-COMP:9863"/>
        <dbReference type="Rhea" id="RHEA-COMP:11604"/>
        <dbReference type="ChEBI" id="CHEBI:29999"/>
        <dbReference type="ChEBI" id="CHEBI:58392"/>
        <dbReference type="ChEBI" id="CHEBI:58601"/>
        <dbReference type="ChEBI" id="CHEBI:83421"/>
    </reaction>
</comment>
<comment type="catalytic activity">
    <reaction evidence="3">
        <text>alpha-D-glucose 1,6-bisphosphate + L-seryl-[protein] = O-phospho-L-seryl-[protein] + alpha-D-glucose 6-phosphate</text>
        <dbReference type="Rhea" id="RHEA:68752"/>
        <dbReference type="Rhea" id="RHEA-COMP:9863"/>
        <dbReference type="Rhea" id="RHEA-COMP:11604"/>
        <dbReference type="ChEBI" id="CHEBI:29999"/>
        <dbReference type="ChEBI" id="CHEBI:58225"/>
        <dbReference type="ChEBI" id="CHEBI:58392"/>
        <dbReference type="ChEBI" id="CHEBI:83421"/>
    </reaction>
</comment>
<comment type="cofactor">
    <cofactor evidence="1">
        <name>Mg(2+)</name>
        <dbReference type="ChEBI" id="CHEBI:18420"/>
    </cofactor>
    <text evidence="1">Binds 1 Mg(2+) ion per subunit.</text>
</comment>
<comment type="activity regulation">
    <text evidence="3">Inhibited by the Calvin cycle intermediates fructose-1,6-bisphosphate and ribulose-1,5-bisphosphate.</text>
</comment>
<comment type="subunit">
    <text evidence="1">Monomer.</text>
</comment>
<comment type="subcellular location">
    <subcellularLocation>
        <location evidence="4">Plastid</location>
        <location evidence="4">Chloroplast</location>
    </subcellularLocation>
</comment>
<comment type="similarity">
    <text evidence="5">Belongs to the phosphohexose mutase family.</text>
</comment>
<gene>
    <name type="primary">PGMP</name>
</gene>